<accession>A7N9U2</accession>
<gene>
    <name evidence="1" type="primary">rpsE</name>
    <name type="ordered locus">FTA_0268</name>
</gene>
<reference key="1">
    <citation type="journal article" date="2009" name="PLoS ONE">
        <title>Complete genome sequence of Francisella tularensis subspecies holarctica FTNF002-00.</title>
        <authorList>
            <person name="Barabote R.D."/>
            <person name="Xie G."/>
            <person name="Brettin T.S."/>
            <person name="Hinrichs S.H."/>
            <person name="Fey P.D."/>
            <person name="Jay J.J."/>
            <person name="Engle J.L."/>
            <person name="Godbole S.D."/>
            <person name="Noronha J.M."/>
            <person name="Scheuermann R.H."/>
            <person name="Zhou L.W."/>
            <person name="Lion C."/>
            <person name="Dempsey M.P."/>
        </authorList>
    </citation>
    <scope>NUCLEOTIDE SEQUENCE [LARGE SCALE GENOMIC DNA]</scope>
    <source>
        <strain>FTNF002-00 / FTA</strain>
    </source>
</reference>
<dbReference type="EMBL" id="CP000803">
    <property type="protein sequence ID" value="ABU60745.1"/>
    <property type="molecule type" value="Genomic_DNA"/>
</dbReference>
<dbReference type="RefSeq" id="WP_003021588.1">
    <property type="nucleotide sequence ID" value="NC_009749.1"/>
</dbReference>
<dbReference type="SMR" id="A7N9U2"/>
<dbReference type="GeneID" id="75264244"/>
<dbReference type="KEGG" id="fta:FTA_0268"/>
<dbReference type="HOGENOM" id="CLU_065898_2_2_6"/>
<dbReference type="GO" id="GO:0015935">
    <property type="term" value="C:small ribosomal subunit"/>
    <property type="evidence" value="ECO:0007669"/>
    <property type="project" value="InterPro"/>
</dbReference>
<dbReference type="GO" id="GO:0019843">
    <property type="term" value="F:rRNA binding"/>
    <property type="evidence" value="ECO:0007669"/>
    <property type="project" value="UniProtKB-UniRule"/>
</dbReference>
<dbReference type="GO" id="GO:0003735">
    <property type="term" value="F:structural constituent of ribosome"/>
    <property type="evidence" value="ECO:0007669"/>
    <property type="project" value="InterPro"/>
</dbReference>
<dbReference type="GO" id="GO:0006412">
    <property type="term" value="P:translation"/>
    <property type="evidence" value="ECO:0007669"/>
    <property type="project" value="UniProtKB-UniRule"/>
</dbReference>
<dbReference type="FunFam" id="3.30.160.20:FF:000001">
    <property type="entry name" value="30S ribosomal protein S5"/>
    <property type="match status" value="1"/>
</dbReference>
<dbReference type="FunFam" id="3.30.230.10:FF:000002">
    <property type="entry name" value="30S ribosomal protein S5"/>
    <property type="match status" value="1"/>
</dbReference>
<dbReference type="Gene3D" id="3.30.160.20">
    <property type="match status" value="1"/>
</dbReference>
<dbReference type="Gene3D" id="3.30.230.10">
    <property type="match status" value="1"/>
</dbReference>
<dbReference type="HAMAP" id="MF_01307_B">
    <property type="entry name" value="Ribosomal_uS5_B"/>
    <property type="match status" value="1"/>
</dbReference>
<dbReference type="InterPro" id="IPR020568">
    <property type="entry name" value="Ribosomal_Su5_D2-typ_SF"/>
</dbReference>
<dbReference type="InterPro" id="IPR000851">
    <property type="entry name" value="Ribosomal_uS5"/>
</dbReference>
<dbReference type="InterPro" id="IPR005712">
    <property type="entry name" value="Ribosomal_uS5_bac-type"/>
</dbReference>
<dbReference type="InterPro" id="IPR005324">
    <property type="entry name" value="Ribosomal_uS5_C"/>
</dbReference>
<dbReference type="InterPro" id="IPR013810">
    <property type="entry name" value="Ribosomal_uS5_N"/>
</dbReference>
<dbReference type="InterPro" id="IPR018192">
    <property type="entry name" value="Ribosomal_uS5_N_CS"/>
</dbReference>
<dbReference type="InterPro" id="IPR014721">
    <property type="entry name" value="Ribsml_uS5_D2-typ_fold_subgr"/>
</dbReference>
<dbReference type="NCBIfam" id="TIGR01021">
    <property type="entry name" value="rpsE_bact"/>
    <property type="match status" value="1"/>
</dbReference>
<dbReference type="PANTHER" id="PTHR48277">
    <property type="entry name" value="MITOCHONDRIAL RIBOSOMAL PROTEIN S5"/>
    <property type="match status" value="1"/>
</dbReference>
<dbReference type="PANTHER" id="PTHR48277:SF1">
    <property type="entry name" value="MITOCHONDRIAL RIBOSOMAL PROTEIN S5"/>
    <property type="match status" value="1"/>
</dbReference>
<dbReference type="Pfam" id="PF00333">
    <property type="entry name" value="Ribosomal_S5"/>
    <property type="match status" value="1"/>
</dbReference>
<dbReference type="Pfam" id="PF03719">
    <property type="entry name" value="Ribosomal_S5_C"/>
    <property type="match status" value="1"/>
</dbReference>
<dbReference type="SUPFAM" id="SSF54768">
    <property type="entry name" value="dsRNA-binding domain-like"/>
    <property type="match status" value="1"/>
</dbReference>
<dbReference type="SUPFAM" id="SSF54211">
    <property type="entry name" value="Ribosomal protein S5 domain 2-like"/>
    <property type="match status" value="1"/>
</dbReference>
<dbReference type="PROSITE" id="PS00585">
    <property type="entry name" value="RIBOSOMAL_S5"/>
    <property type="match status" value="1"/>
</dbReference>
<dbReference type="PROSITE" id="PS50881">
    <property type="entry name" value="S5_DSRBD"/>
    <property type="match status" value="1"/>
</dbReference>
<feature type="chain" id="PRO_0000323124" description="Small ribosomal subunit protein uS5">
    <location>
        <begin position="1"/>
        <end position="166"/>
    </location>
</feature>
<feature type="domain" description="S5 DRBM" evidence="1">
    <location>
        <begin position="11"/>
        <end position="74"/>
    </location>
</feature>
<protein>
    <recommendedName>
        <fullName evidence="1">Small ribosomal subunit protein uS5</fullName>
    </recommendedName>
    <alternativeName>
        <fullName evidence="2">30S ribosomal protein S5</fullName>
    </alternativeName>
</protein>
<evidence type="ECO:0000255" key="1">
    <source>
        <dbReference type="HAMAP-Rule" id="MF_01307"/>
    </source>
</evidence>
<evidence type="ECO:0000305" key="2"/>
<proteinExistence type="inferred from homology"/>
<comment type="function">
    <text evidence="1">With S4 and S12 plays an important role in translational accuracy.</text>
</comment>
<comment type="function">
    <text evidence="1">Located at the back of the 30S subunit body where it stabilizes the conformation of the head with respect to the body.</text>
</comment>
<comment type="subunit">
    <text evidence="1">Part of the 30S ribosomal subunit. Contacts proteins S4 and S8.</text>
</comment>
<comment type="domain">
    <text>The N-terminal domain interacts with the head of the 30S subunit; the C-terminal domain interacts with the body and contacts protein S4. The interaction surface between S4 and S5 is involved in control of translational fidelity.</text>
</comment>
<comment type="similarity">
    <text evidence="1">Belongs to the universal ribosomal protein uS5 family.</text>
</comment>
<organism>
    <name type="scientific">Francisella tularensis subsp. holarctica (strain FTNF002-00 / FTA)</name>
    <dbReference type="NCBI Taxonomy" id="458234"/>
    <lineage>
        <taxon>Bacteria</taxon>
        <taxon>Pseudomonadati</taxon>
        <taxon>Pseudomonadota</taxon>
        <taxon>Gammaproteobacteria</taxon>
        <taxon>Thiotrichales</taxon>
        <taxon>Francisellaceae</taxon>
        <taxon>Francisella</taxon>
    </lineage>
</organism>
<name>RS5_FRATF</name>
<keyword id="KW-0687">Ribonucleoprotein</keyword>
<keyword id="KW-0689">Ribosomal protein</keyword>
<keyword id="KW-0694">RNA-binding</keyword>
<keyword id="KW-0699">rRNA-binding</keyword>
<sequence>MSNEVKKNEELIEKLVSVKRHSKTVKGGRIMSFAALTVVGDGKGRIGVGRGKSREVPAAIQKAMENAKKNMVSVNLNNDTLWYPVMSNHGASKVFMQPASAGTGIIAGGAMRSVFEAVGVHNVLAKTYGSTNPANVVRATIAGLAKIKSPDEIAEKRGLSVEEIQG</sequence>